<organism>
    <name type="scientific">Cupriavidus pinatubonensis (strain JMP 134 / LMG 1197)</name>
    <name type="common">Cupriavidus necator (strain JMP 134)</name>
    <dbReference type="NCBI Taxonomy" id="264198"/>
    <lineage>
        <taxon>Bacteria</taxon>
        <taxon>Pseudomonadati</taxon>
        <taxon>Pseudomonadota</taxon>
        <taxon>Betaproteobacteria</taxon>
        <taxon>Burkholderiales</taxon>
        <taxon>Burkholderiaceae</taxon>
        <taxon>Cupriavidus</taxon>
    </lineage>
</organism>
<sequence>MAAKDVVFGDAARAKMVEGVNILANAVKVTLGPKGRNVVLERSFGGPTVTKDGVSVAKEIELKDKLQNMGAQMVKEVASKTSDNAGDGTTTATVLAQSIVREGMKFVAAGMNPMDLKRGIDKAVAAAVEELKKVSKPTTTSKEIAQVGAISANSDTSIGERIAEAMDKVGKEGVITVEDGKSLADELEVVEGMQFDRGYLSPYFINNPEKQVVQLDSPFVLLFDKKVSNIRDLLPVLEQVAKAGRPLLIIAEDVEGEALATLVVNNIRGILKTAAVKAPGFGDRRKAMLEDIAILTGGTVIAEEIGLTLEKATLNDLGQAKRIEIGKENTIIIDGAGDAAAIEGRVKQIRAQIEEATSDYDREKLQERVAKLAGGVAVIKVGAATEVEMKEKKARVEDALHATRAAVEEGIVPGGGVALLRARAAISALTGENPDQNAGIKIVLRAMEEPLRQIVLNAGEEASVVVAKVIEGKGNYGYNAASGEYGDLVEMGVLDPTKVTRTALQNAASVASLMLTTDCAVAETPKEESAPAMPGGMGGMGGMEGMM</sequence>
<gene>
    <name evidence="1" type="primary">groEL</name>
    <name evidence="1" type="synonym">groL</name>
    <name type="ordered locus">Reut_A2656</name>
</gene>
<feature type="chain" id="PRO_0000256956" description="Chaperonin GroEL">
    <location>
        <begin position="1"/>
        <end position="547"/>
    </location>
</feature>
<feature type="binding site" evidence="1">
    <location>
        <begin position="30"/>
        <end position="33"/>
    </location>
    <ligand>
        <name>ATP</name>
        <dbReference type="ChEBI" id="CHEBI:30616"/>
    </ligand>
</feature>
<feature type="binding site" evidence="1">
    <location>
        <position position="51"/>
    </location>
    <ligand>
        <name>ATP</name>
        <dbReference type="ChEBI" id="CHEBI:30616"/>
    </ligand>
</feature>
<feature type="binding site" evidence="1">
    <location>
        <begin position="87"/>
        <end position="91"/>
    </location>
    <ligand>
        <name>ATP</name>
        <dbReference type="ChEBI" id="CHEBI:30616"/>
    </ligand>
</feature>
<feature type="binding site" evidence="1">
    <location>
        <position position="415"/>
    </location>
    <ligand>
        <name>ATP</name>
        <dbReference type="ChEBI" id="CHEBI:30616"/>
    </ligand>
</feature>
<feature type="binding site" evidence="1">
    <location>
        <begin position="479"/>
        <end position="481"/>
    </location>
    <ligand>
        <name>ATP</name>
        <dbReference type="ChEBI" id="CHEBI:30616"/>
    </ligand>
</feature>
<feature type="binding site" evidence="1">
    <location>
        <position position="495"/>
    </location>
    <ligand>
        <name>ATP</name>
        <dbReference type="ChEBI" id="CHEBI:30616"/>
    </ligand>
</feature>
<protein>
    <recommendedName>
        <fullName evidence="1">Chaperonin GroEL</fullName>
        <ecNumber evidence="1">5.6.1.7</ecNumber>
    </recommendedName>
    <alternativeName>
        <fullName evidence="1">60 kDa chaperonin</fullName>
    </alternativeName>
    <alternativeName>
        <fullName evidence="1">Chaperonin-60</fullName>
        <shortName evidence="1">Cpn60</shortName>
    </alternativeName>
</protein>
<proteinExistence type="inferred from homology"/>
<comment type="function">
    <text evidence="1">Together with its co-chaperonin GroES, plays an essential role in assisting protein folding. The GroEL-GroES system forms a nano-cage that allows encapsulation of the non-native substrate proteins and provides a physical environment optimized to promote and accelerate protein folding.</text>
</comment>
<comment type="catalytic activity">
    <reaction evidence="1">
        <text>ATP + H2O + a folded polypeptide = ADP + phosphate + an unfolded polypeptide.</text>
        <dbReference type="EC" id="5.6.1.7"/>
    </reaction>
</comment>
<comment type="subunit">
    <text evidence="1">Forms a cylinder of 14 subunits composed of two heptameric rings stacked back-to-back. Interacts with the co-chaperonin GroES.</text>
</comment>
<comment type="subcellular location">
    <subcellularLocation>
        <location evidence="1">Cytoplasm</location>
    </subcellularLocation>
</comment>
<comment type="similarity">
    <text evidence="1">Belongs to the chaperonin (HSP60) family.</text>
</comment>
<reference key="1">
    <citation type="journal article" date="2010" name="PLoS ONE">
        <title>The complete multipartite genome sequence of Cupriavidus necator JMP134, a versatile pollutant degrader.</title>
        <authorList>
            <person name="Lykidis A."/>
            <person name="Perez-Pantoja D."/>
            <person name="Ledger T."/>
            <person name="Mavromatis K."/>
            <person name="Anderson I.J."/>
            <person name="Ivanova N.N."/>
            <person name="Hooper S.D."/>
            <person name="Lapidus A."/>
            <person name="Lucas S."/>
            <person name="Gonzalez B."/>
            <person name="Kyrpides N.C."/>
        </authorList>
    </citation>
    <scope>NUCLEOTIDE SEQUENCE [LARGE SCALE GENOMIC DNA]</scope>
    <source>
        <strain>JMP134 / LMG 1197</strain>
    </source>
</reference>
<evidence type="ECO:0000255" key="1">
    <source>
        <dbReference type="HAMAP-Rule" id="MF_00600"/>
    </source>
</evidence>
<keyword id="KW-0067">ATP-binding</keyword>
<keyword id="KW-0143">Chaperone</keyword>
<keyword id="KW-0963">Cytoplasm</keyword>
<keyword id="KW-0413">Isomerase</keyword>
<keyword id="KW-0547">Nucleotide-binding</keyword>
<accession>Q46XW6</accession>
<name>CH60_CUPPJ</name>
<dbReference type="EC" id="5.6.1.7" evidence="1"/>
<dbReference type="EMBL" id="CP000090">
    <property type="protein sequence ID" value="AAZ62017.1"/>
    <property type="molecule type" value="Genomic_DNA"/>
</dbReference>
<dbReference type="SMR" id="Q46XW6"/>
<dbReference type="STRING" id="264198.Reut_A2656"/>
<dbReference type="KEGG" id="reu:Reut_A2656"/>
<dbReference type="eggNOG" id="COG0459">
    <property type="taxonomic scope" value="Bacteria"/>
</dbReference>
<dbReference type="HOGENOM" id="CLU_016503_3_0_4"/>
<dbReference type="OrthoDB" id="9766614at2"/>
<dbReference type="GO" id="GO:0005737">
    <property type="term" value="C:cytoplasm"/>
    <property type="evidence" value="ECO:0007669"/>
    <property type="project" value="UniProtKB-SubCell"/>
</dbReference>
<dbReference type="GO" id="GO:0005524">
    <property type="term" value="F:ATP binding"/>
    <property type="evidence" value="ECO:0007669"/>
    <property type="project" value="UniProtKB-UniRule"/>
</dbReference>
<dbReference type="GO" id="GO:0140662">
    <property type="term" value="F:ATP-dependent protein folding chaperone"/>
    <property type="evidence" value="ECO:0007669"/>
    <property type="project" value="InterPro"/>
</dbReference>
<dbReference type="GO" id="GO:0016853">
    <property type="term" value="F:isomerase activity"/>
    <property type="evidence" value="ECO:0007669"/>
    <property type="project" value="UniProtKB-KW"/>
</dbReference>
<dbReference type="GO" id="GO:0051082">
    <property type="term" value="F:unfolded protein binding"/>
    <property type="evidence" value="ECO:0007669"/>
    <property type="project" value="UniProtKB-UniRule"/>
</dbReference>
<dbReference type="GO" id="GO:0042026">
    <property type="term" value="P:protein refolding"/>
    <property type="evidence" value="ECO:0007669"/>
    <property type="project" value="UniProtKB-UniRule"/>
</dbReference>
<dbReference type="CDD" id="cd03344">
    <property type="entry name" value="GroEL"/>
    <property type="match status" value="1"/>
</dbReference>
<dbReference type="FunFam" id="1.10.560.10:FF:000001">
    <property type="entry name" value="60 kDa chaperonin"/>
    <property type="match status" value="1"/>
</dbReference>
<dbReference type="FunFam" id="3.50.7.10:FF:000001">
    <property type="entry name" value="60 kDa chaperonin"/>
    <property type="match status" value="1"/>
</dbReference>
<dbReference type="Gene3D" id="3.50.7.10">
    <property type="entry name" value="GroEL"/>
    <property type="match status" value="1"/>
</dbReference>
<dbReference type="Gene3D" id="1.10.560.10">
    <property type="entry name" value="GroEL-like equatorial domain"/>
    <property type="match status" value="1"/>
</dbReference>
<dbReference type="Gene3D" id="3.30.260.10">
    <property type="entry name" value="TCP-1-like chaperonin intermediate domain"/>
    <property type="match status" value="1"/>
</dbReference>
<dbReference type="HAMAP" id="MF_00600">
    <property type="entry name" value="CH60"/>
    <property type="match status" value="1"/>
</dbReference>
<dbReference type="InterPro" id="IPR018370">
    <property type="entry name" value="Chaperonin_Cpn60_CS"/>
</dbReference>
<dbReference type="InterPro" id="IPR001844">
    <property type="entry name" value="Cpn60/GroEL"/>
</dbReference>
<dbReference type="InterPro" id="IPR002423">
    <property type="entry name" value="Cpn60/GroEL/TCP-1"/>
</dbReference>
<dbReference type="InterPro" id="IPR027409">
    <property type="entry name" value="GroEL-like_apical_dom_sf"/>
</dbReference>
<dbReference type="InterPro" id="IPR027413">
    <property type="entry name" value="GROEL-like_equatorial_sf"/>
</dbReference>
<dbReference type="InterPro" id="IPR027410">
    <property type="entry name" value="TCP-1-like_intermed_sf"/>
</dbReference>
<dbReference type="NCBIfam" id="TIGR02348">
    <property type="entry name" value="GroEL"/>
    <property type="match status" value="1"/>
</dbReference>
<dbReference type="NCBIfam" id="NF000592">
    <property type="entry name" value="PRK00013.1"/>
    <property type="match status" value="1"/>
</dbReference>
<dbReference type="NCBIfam" id="NF009487">
    <property type="entry name" value="PRK12849.1"/>
    <property type="match status" value="1"/>
</dbReference>
<dbReference type="NCBIfam" id="NF009488">
    <property type="entry name" value="PRK12850.1"/>
    <property type="match status" value="1"/>
</dbReference>
<dbReference type="NCBIfam" id="NF009489">
    <property type="entry name" value="PRK12851.1"/>
    <property type="match status" value="1"/>
</dbReference>
<dbReference type="PANTHER" id="PTHR45633">
    <property type="entry name" value="60 KDA HEAT SHOCK PROTEIN, MITOCHONDRIAL"/>
    <property type="match status" value="1"/>
</dbReference>
<dbReference type="Pfam" id="PF00118">
    <property type="entry name" value="Cpn60_TCP1"/>
    <property type="match status" value="1"/>
</dbReference>
<dbReference type="PRINTS" id="PR00298">
    <property type="entry name" value="CHAPERONIN60"/>
</dbReference>
<dbReference type="SUPFAM" id="SSF52029">
    <property type="entry name" value="GroEL apical domain-like"/>
    <property type="match status" value="1"/>
</dbReference>
<dbReference type="SUPFAM" id="SSF48592">
    <property type="entry name" value="GroEL equatorial domain-like"/>
    <property type="match status" value="1"/>
</dbReference>
<dbReference type="SUPFAM" id="SSF54849">
    <property type="entry name" value="GroEL-intermediate domain like"/>
    <property type="match status" value="1"/>
</dbReference>
<dbReference type="PROSITE" id="PS00296">
    <property type="entry name" value="CHAPERONINS_CPN60"/>
    <property type="match status" value="1"/>
</dbReference>